<proteinExistence type="inferred from homology"/>
<reference key="1">
    <citation type="journal article" date="1994" name="Mol. Gen. Genet.">
        <title>Identification of the XorII methyltransferase gene and a vsr homolog from Xanthomonas oryzae pv. oryzae.</title>
        <authorList>
            <person name="Choi S.H."/>
            <person name="Leach J.E."/>
        </authorList>
    </citation>
    <scope>NUCLEOTIDE SEQUENCE [GENOMIC DNA]</scope>
    <source>
        <strain>JW89011</strain>
    </source>
</reference>
<reference key="2">
    <citation type="journal article" date="2005" name="Nucleic Acids Res.">
        <title>The genome sequence of Xanthomonas oryzae pathovar oryzae KACC10331, the bacterial blight pathogen of rice.</title>
        <authorList>
            <person name="Lee B.-M."/>
            <person name="Park Y.-J."/>
            <person name="Park D.-S."/>
            <person name="Kang H.-W."/>
            <person name="Kim J.-G."/>
            <person name="Song E.-S."/>
            <person name="Park I.-C."/>
            <person name="Yoon U.-H."/>
            <person name="Hahn J.-H."/>
            <person name="Koo B.-S."/>
            <person name="Lee G.-B."/>
            <person name="Kim H."/>
            <person name="Park H.-S."/>
            <person name="Yoon K.-O."/>
            <person name="Kim J.-H."/>
            <person name="Jung C.-H."/>
            <person name="Koh N.-H."/>
            <person name="Seo J.-S."/>
            <person name="Go S.-J."/>
        </authorList>
    </citation>
    <scope>NUCLEOTIDE SEQUENCE [LARGE SCALE GENOMIC DNA]</scope>
    <source>
        <strain>KACC10331 / KXO85</strain>
    </source>
</reference>
<reference key="3">
    <citation type="journal article" date="2003" name="Nucleic Acids Res.">
        <title>A nomenclature for restriction enzymes, DNA methyltransferases, homing endonucleases and their genes.</title>
        <authorList>
            <person name="Roberts R.J."/>
            <person name="Belfort M."/>
            <person name="Bestor T."/>
            <person name="Bhagwat A.S."/>
            <person name="Bickle T.A."/>
            <person name="Bitinaite J."/>
            <person name="Blumenthal R.M."/>
            <person name="Degtyarev S.K."/>
            <person name="Dryden D.T."/>
            <person name="Dybvig K."/>
            <person name="Firman K."/>
            <person name="Gromova E.S."/>
            <person name="Gumport R.I."/>
            <person name="Halford S.E."/>
            <person name="Hattman S."/>
            <person name="Heitman J."/>
            <person name="Hornby D.P."/>
            <person name="Janulaitis A."/>
            <person name="Jeltsch A."/>
            <person name="Josephsen J."/>
            <person name="Kiss A."/>
            <person name="Klaenhammer T.R."/>
            <person name="Kobayashi I."/>
            <person name="Kong H."/>
            <person name="Krueger D.H."/>
            <person name="Lacks S."/>
            <person name="Marinus M.G."/>
            <person name="Miyahara M."/>
            <person name="Morgan R.D."/>
            <person name="Murray N.E."/>
            <person name="Nagaraja V."/>
            <person name="Piekarowicz A."/>
            <person name="Pingoud A."/>
            <person name="Raleigh E."/>
            <person name="Rao D.N."/>
            <person name="Reich N."/>
            <person name="Repin V.E."/>
            <person name="Selker E.U."/>
            <person name="Shaw P.C."/>
            <person name="Stein D.C."/>
            <person name="Stoddard B.L."/>
            <person name="Szybalski W."/>
            <person name="Trautner T.A."/>
            <person name="Van Etten J.L."/>
            <person name="Vitor J.M."/>
            <person name="Wilson G.G."/>
            <person name="Xu S.Y."/>
        </authorList>
    </citation>
    <scope>NOMENCLATURE</scope>
</reference>
<name>VSX2_XANOR</name>
<organism>
    <name type="scientific">Xanthomonas oryzae pv. oryzae (strain KACC10331 / KXO85)</name>
    <dbReference type="NCBI Taxonomy" id="291331"/>
    <lineage>
        <taxon>Bacteria</taxon>
        <taxon>Pseudomonadati</taxon>
        <taxon>Pseudomonadota</taxon>
        <taxon>Gammaproteobacteria</taxon>
        <taxon>Lysobacterales</taxon>
        <taxon>Lysobacteraceae</taxon>
        <taxon>Xanthomonas</taxon>
    </lineage>
</organism>
<gene>
    <name evidence="3" type="primary">vsr</name>
    <name type="synonym">xorIIV</name>
    <name type="ordered locus">XOO0606</name>
</gene>
<evidence type="ECO:0000250" key="1">
    <source>
        <dbReference type="UniProtKB" id="P09184"/>
    </source>
</evidence>
<evidence type="ECO:0000303" key="2">
    <source>
    </source>
</evidence>
<evidence type="ECO:0000303" key="3">
    <source>
    </source>
</evidence>
<evidence type="ECO:0000305" key="4"/>
<sequence>MTDRLSPERRRYLMQQVRSKNTRPEKAVRSLLHSIGYRFRLHRKDLPGTPDIVFPSRRLVLFVHGCFWHGHGCRIGQLPKSRLDYWSPKIEANRARDQRKEAALAAEGWRVAVVWQCELSDLGALEARLRNILDPS</sequence>
<dbReference type="EC" id="3.1.-.-"/>
<dbReference type="EMBL" id="U06424">
    <property type="protein sequence ID" value="AAA50431.1"/>
    <property type="molecule type" value="Genomic_DNA"/>
</dbReference>
<dbReference type="EMBL" id="AE013598">
    <property type="protein sequence ID" value="AAW73860.1"/>
    <property type="status" value="ALT_INIT"/>
    <property type="molecule type" value="Genomic_DNA"/>
</dbReference>
<dbReference type="PIR" id="S46292">
    <property type="entry name" value="S46292"/>
</dbReference>
<dbReference type="SMR" id="Q56829"/>
<dbReference type="STRING" id="291331.XOO0606"/>
<dbReference type="REBASE" id="101150">
    <property type="entry name" value="V.Rga602ORF33P"/>
</dbReference>
<dbReference type="REBASE" id="10810">
    <property type="entry name" value="V.XorKIP"/>
</dbReference>
<dbReference type="REBASE" id="203804">
    <property type="entry name" value="V.Keu1446ORF816P"/>
</dbReference>
<dbReference type="REBASE" id="3690">
    <property type="entry name" value="V.XorIIP"/>
</dbReference>
<dbReference type="KEGG" id="xoo:XOO0606"/>
<dbReference type="HOGENOM" id="CLU_111913_1_1_6"/>
<dbReference type="Proteomes" id="UP000006735">
    <property type="component" value="Chromosome"/>
</dbReference>
<dbReference type="GO" id="GO:0004519">
    <property type="term" value="F:endonuclease activity"/>
    <property type="evidence" value="ECO:0007669"/>
    <property type="project" value="UniProtKB-KW"/>
</dbReference>
<dbReference type="GO" id="GO:0009307">
    <property type="term" value="P:DNA restriction-modification system"/>
    <property type="evidence" value="ECO:0007669"/>
    <property type="project" value="UniProtKB-KW"/>
</dbReference>
<dbReference type="GO" id="GO:0006298">
    <property type="term" value="P:mismatch repair"/>
    <property type="evidence" value="ECO:0007669"/>
    <property type="project" value="InterPro"/>
</dbReference>
<dbReference type="CDD" id="cd00221">
    <property type="entry name" value="Vsr"/>
    <property type="match status" value="1"/>
</dbReference>
<dbReference type="Gene3D" id="3.40.960.10">
    <property type="entry name" value="VSR Endonuclease"/>
    <property type="match status" value="1"/>
</dbReference>
<dbReference type="InterPro" id="IPR004603">
    <property type="entry name" value="DNA_mismatch_endonuc_vsr"/>
</dbReference>
<dbReference type="InterPro" id="IPR011335">
    <property type="entry name" value="Restrct_endonuc-II-like"/>
</dbReference>
<dbReference type="NCBIfam" id="TIGR00632">
    <property type="entry name" value="vsr"/>
    <property type="match status" value="1"/>
</dbReference>
<dbReference type="Pfam" id="PF03852">
    <property type="entry name" value="Vsr"/>
    <property type="match status" value="1"/>
</dbReference>
<dbReference type="PIRSF" id="PIRSF018267">
    <property type="entry name" value="VSR_endonuc"/>
    <property type="match status" value="1"/>
</dbReference>
<dbReference type="SUPFAM" id="SSF52980">
    <property type="entry name" value="Restriction endonuclease-like"/>
    <property type="match status" value="1"/>
</dbReference>
<comment type="function">
    <text evidence="1">May nick XorII sequences that contain T/G mispairs resulting from m5C-deamination. If unrepaired, these mismatches can lead to C-to-T transition mutations. The very short patch (VSP) repair process counteracts the mutagenic process by repairing the mismatches in favor of the G-containing strand. This enzyme is an endonuclease that nicks double-stranded DNA within the sequence CGATCG (C-methylation site unknown) next to the thymidine residue that is mismatched to 2'-deoxyguanosine. The incision is mismatch-dependent and strand-specific.</text>
</comment>
<comment type="similarity">
    <text evidence="4">Belongs to the Vsr family.</text>
</comment>
<comment type="sequence caution" evidence="4">
    <conflict type="erroneous initiation">
        <sequence resource="EMBL-CDS" id="AAW73860"/>
    </conflict>
    <text>Extended N-terminus.</text>
</comment>
<accession>Q56829</accession>
<accession>Q5H5B0</accession>
<keyword id="KW-0227">DNA damage</keyword>
<keyword id="KW-0234">DNA repair</keyword>
<keyword id="KW-0255">Endonuclease</keyword>
<keyword id="KW-0378">Hydrolase</keyword>
<keyword id="KW-0540">Nuclease</keyword>
<keyword id="KW-1185">Reference proteome</keyword>
<keyword id="KW-0680">Restriction system</keyword>
<protein>
    <recommendedName>
        <fullName evidence="2">Type II nicking enzyme V.XorIIP</fullName>
        <ecNumber>3.1.-.-</ecNumber>
    </recommendedName>
    <alternativeName>
        <fullName>V.XorII</fullName>
    </alternativeName>
    <alternativeName>
        <fullName>XorII very short patch repair endonuclease</fullName>
    </alternativeName>
</protein>
<feature type="chain" id="PRO_0000200293" description="Type II nicking enzyme V.XorIIP">
    <location>
        <begin position="1"/>
        <end position="136"/>
    </location>
</feature>
<feature type="sequence conflict" description="In Ref. 1; AAA50431." evidence="4" ref="1">
    <original>G</original>
    <variation>A</variation>
    <location>
        <position position="36"/>
    </location>
</feature>